<organism>
    <name type="scientific">Salmonella paratyphi A (strain ATCC 9150 / SARB42)</name>
    <dbReference type="NCBI Taxonomy" id="295319"/>
    <lineage>
        <taxon>Bacteria</taxon>
        <taxon>Pseudomonadati</taxon>
        <taxon>Pseudomonadota</taxon>
        <taxon>Gammaproteobacteria</taxon>
        <taxon>Enterobacterales</taxon>
        <taxon>Enterobacteriaceae</taxon>
        <taxon>Salmonella</taxon>
    </lineage>
</organism>
<accession>Q5PFT6</accession>
<comment type="function">
    <text evidence="1">Catalyzes the base-exchange of a guanine (G) residue with the queuine precursor 7-aminomethyl-7-deazaguanine (PreQ1) at position 34 (anticodon wobble position) in tRNAs with GU(N) anticodons (tRNA-Asp, -Asn, -His and -Tyr). Catalysis occurs through a double-displacement mechanism. The nucleophile active site attacks the C1' of nucleotide 34 to detach the guanine base from the RNA, forming a covalent enzyme-RNA intermediate. The proton acceptor active site deprotonates the incoming PreQ1, allowing a nucleophilic attack on the C1' of the ribose to form the product. After dissociation, two additional enzymatic reactions on the tRNA convert PreQ1 to queuine (Q), resulting in the hypermodified nucleoside queuosine (7-(((4,5-cis-dihydroxy-2-cyclopenten-1-yl)amino)methyl)-7-deazaguanosine).</text>
</comment>
<comment type="catalytic activity">
    <reaction evidence="1">
        <text>7-aminomethyl-7-carbaguanine + guanosine(34) in tRNA = 7-aminomethyl-7-carbaguanosine(34) in tRNA + guanine</text>
        <dbReference type="Rhea" id="RHEA:24104"/>
        <dbReference type="Rhea" id="RHEA-COMP:10341"/>
        <dbReference type="Rhea" id="RHEA-COMP:10342"/>
        <dbReference type="ChEBI" id="CHEBI:16235"/>
        <dbReference type="ChEBI" id="CHEBI:58703"/>
        <dbReference type="ChEBI" id="CHEBI:74269"/>
        <dbReference type="ChEBI" id="CHEBI:82833"/>
        <dbReference type="EC" id="2.4.2.29"/>
    </reaction>
</comment>
<comment type="cofactor">
    <cofactor evidence="1">
        <name>Zn(2+)</name>
        <dbReference type="ChEBI" id="CHEBI:29105"/>
    </cofactor>
    <text evidence="1">Binds 1 zinc ion per subunit.</text>
</comment>
<comment type="pathway">
    <text evidence="1">tRNA modification; tRNA-queuosine biosynthesis.</text>
</comment>
<comment type="subunit">
    <text evidence="1">Homodimer. Within each dimer, one monomer is responsible for RNA recognition and catalysis, while the other monomer binds to the replacement base PreQ1.</text>
</comment>
<comment type="similarity">
    <text evidence="1">Belongs to the queuine tRNA-ribosyltransferase family.</text>
</comment>
<evidence type="ECO:0000255" key="1">
    <source>
        <dbReference type="HAMAP-Rule" id="MF_00168"/>
    </source>
</evidence>
<keyword id="KW-0328">Glycosyltransferase</keyword>
<keyword id="KW-0479">Metal-binding</keyword>
<keyword id="KW-0671">Queuosine biosynthesis</keyword>
<keyword id="KW-0808">Transferase</keyword>
<keyword id="KW-0819">tRNA processing</keyword>
<keyword id="KW-0862">Zinc</keyword>
<sequence>MKFELDTTDGRARRGRLVFDRGVVETPAFMPVGTYGTVKGMTPEEVEATGAQIILGNTFHLWLRPGQEIMKLHGDLHDFMQWKGPILTDSGGFQVFSLGDIRKITEQGVHFRNPINGDPIFLDPEKSMEIQYDLGSDIVMIFDECTPYPADWDYAKRSMEMSLRWAKRSRDRFDSLGNKNALFGIIQGSVYEDLRDISVKGLVEIGFDGYAVGGLAVGEPKADMHRILEHVCPQLPADKPRYLMGVGKPEDLVEGVRRGIDMFDCVMPTRNARNGHLFVTDGVVKIRNAKHKSDTSPLDAECDCYTCRNYSRAYLHHLDRCNEILGARLNTIHNLRYYQRLMAGLRKAIEEGKLESFVTEFYQRQGRPVPPLNVD</sequence>
<reference key="1">
    <citation type="journal article" date="2004" name="Nat. Genet.">
        <title>Comparison of genome degradation in Paratyphi A and Typhi, human-restricted serovars of Salmonella enterica that cause typhoid.</title>
        <authorList>
            <person name="McClelland M."/>
            <person name="Sanderson K.E."/>
            <person name="Clifton S.W."/>
            <person name="Latreille P."/>
            <person name="Porwollik S."/>
            <person name="Sabo A."/>
            <person name="Meyer R."/>
            <person name="Bieri T."/>
            <person name="Ozersky P."/>
            <person name="McLellan M."/>
            <person name="Harkins C.R."/>
            <person name="Wang C."/>
            <person name="Nguyen C."/>
            <person name="Berghoff A."/>
            <person name="Elliott G."/>
            <person name="Kohlberg S."/>
            <person name="Strong C."/>
            <person name="Du F."/>
            <person name="Carter J."/>
            <person name="Kremizki C."/>
            <person name="Layman D."/>
            <person name="Leonard S."/>
            <person name="Sun H."/>
            <person name="Fulton L."/>
            <person name="Nash W."/>
            <person name="Miner T."/>
            <person name="Minx P."/>
            <person name="Delehaunty K."/>
            <person name="Fronick C."/>
            <person name="Magrini V."/>
            <person name="Nhan M."/>
            <person name="Warren W."/>
            <person name="Florea L."/>
            <person name="Spieth J."/>
            <person name="Wilson R.K."/>
        </authorList>
    </citation>
    <scope>NUCLEOTIDE SEQUENCE [LARGE SCALE GENOMIC DNA]</scope>
    <source>
        <strain>ATCC 9150 / SARB42</strain>
    </source>
</reference>
<protein>
    <recommendedName>
        <fullName evidence="1">Queuine tRNA-ribosyltransferase</fullName>
        <ecNumber evidence="1">2.4.2.29</ecNumber>
    </recommendedName>
    <alternativeName>
        <fullName evidence="1">Guanine insertion enzyme</fullName>
    </alternativeName>
    <alternativeName>
        <fullName evidence="1">tRNA-guanine transglycosylase</fullName>
    </alternativeName>
</protein>
<proteinExistence type="inferred from homology"/>
<feature type="chain" id="PRO_0000135516" description="Queuine tRNA-ribosyltransferase">
    <location>
        <begin position="1"/>
        <end position="375"/>
    </location>
</feature>
<feature type="region of interest" description="RNA binding" evidence="1">
    <location>
        <begin position="245"/>
        <end position="251"/>
    </location>
</feature>
<feature type="region of interest" description="RNA binding; important for wobble base 34 recognition" evidence="1">
    <location>
        <begin position="269"/>
        <end position="273"/>
    </location>
</feature>
<feature type="active site" description="Proton acceptor" evidence="1">
    <location>
        <position position="89"/>
    </location>
</feature>
<feature type="active site" description="Nucleophile" evidence="1">
    <location>
        <position position="264"/>
    </location>
</feature>
<feature type="binding site" evidence="1">
    <location>
        <begin position="89"/>
        <end position="93"/>
    </location>
    <ligand>
        <name>substrate</name>
    </ligand>
</feature>
<feature type="binding site" evidence="1">
    <location>
        <position position="143"/>
    </location>
    <ligand>
        <name>substrate</name>
    </ligand>
</feature>
<feature type="binding site" evidence="1">
    <location>
        <position position="187"/>
    </location>
    <ligand>
        <name>substrate</name>
    </ligand>
</feature>
<feature type="binding site" evidence="1">
    <location>
        <position position="214"/>
    </location>
    <ligand>
        <name>substrate</name>
    </ligand>
</feature>
<feature type="binding site" evidence="1">
    <location>
        <position position="302"/>
    </location>
    <ligand>
        <name>Zn(2+)</name>
        <dbReference type="ChEBI" id="CHEBI:29105"/>
    </ligand>
</feature>
<feature type="binding site" evidence="1">
    <location>
        <position position="304"/>
    </location>
    <ligand>
        <name>Zn(2+)</name>
        <dbReference type="ChEBI" id="CHEBI:29105"/>
    </ligand>
</feature>
<feature type="binding site" evidence="1">
    <location>
        <position position="307"/>
    </location>
    <ligand>
        <name>Zn(2+)</name>
        <dbReference type="ChEBI" id="CHEBI:29105"/>
    </ligand>
</feature>
<feature type="binding site" evidence="1">
    <location>
        <position position="333"/>
    </location>
    <ligand>
        <name>Zn(2+)</name>
        <dbReference type="ChEBI" id="CHEBI:29105"/>
    </ligand>
</feature>
<dbReference type="EC" id="2.4.2.29" evidence="1"/>
<dbReference type="EMBL" id="CP000026">
    <property type="protein sequence ID" value="AAV78203.1"/>
    <property type="molecule type" value="Genomic_DNA"/>
</dbReference>
<dbReference type="RefSeq" id="WP_000667307.1">
    <property type="nucleotide sequence ID" value="NC_006511.1"/>
</dbReference>
<dbReference type="SMR" id="Q5PFT6"/>
<dbReference type="KEGG" id="spt:SPA2318"/>
<dbReference type="HOGENOM" id="CLU_022060_0_1_6"/>
<dbReference type="UniPathway" id="UPA00392"/>
<dbReference type="Proteomes" id="UP000008185">
    <property type="component" value="Chromosome"/>
</dbReference>
<dbReference type="GO" id="GO:0005829">
    <property type="term" value="C:cytosol"/>
    <property type="evidence" value="ECO:0007669"/>
    <property type="project" value="TreeGrafter"/>
</dbReference>
<dbReference type="GO" id="GO:0046872">
    <property type="term" value="F:metal ion binding"/>
    <property type="evidence" value="ECO:0007669"/>
    <property type="project" value="UniProtKB-KW"/>
</dbReference>
<dbReference type="GO" id="GO:0008479">
    <property type="term" value="F:tRNA-guanosine(34) queuine transglycosylase activity"/>
    <property type="evidence" value="ECO:0007669"/>
    <property type="project" value="UniProtKB-UniRule"/>
</dbReference>
<dbReference type="GO" id="GO:0008616">
    <property type="term" value="P:queuosine biosynthetic process"/>
    <property type="evidence" value="ECO:0007669"/>
    <property type="project" value="UniProtKB-UniRule"/>
</dbReference>
<dbReference type="GO" id="GO:0002099">
    <property type="term" value="P:tRNA wobble guanine modification"/>
    <property type="evidence" value="ECO:0007669"/>
    <property type="project" value="TreeGrafter"/>
</dbReference>
<dbReference type="GO" id="GO:0101030">
    <property type="term" value="P:tRNA-guanine transglycosylation"/>
    <property type="evidence" value="ECO:0007669"/>
    <property type="project" value="InterPro"/>
</dbReference>
<dbReference type="FunFam" id="3.20.20.105:FF:000001">
    <property type="entry name" value="Queuine tRNA-ribosyltransferase"/>
    <property type="match status" value="1"/>
</dbReference>
<dbReference type="Gene3D" id="3.20.20.105">
    <property type="entry name" value="Queuine tRNA-ribosyltransferase-like"/>
    <property type="match status" value="1"/>
</dbReference>
<dbReference type="HAMAP" id="MF_00168">
    <property type="entry name" value="Q_tRNA_Tgt"/>
    <property type="match status" value="1"/>
</dbReference>
<dbReference type="InterPro" id="IPR050076">
    <property type="entry name" value="ArchSynthase1/Queuine_TRR"/>
</dbReference>
<dbReference type="InterPro" id="IPR004803">
    <property type="entry name" value="TGT"/>
</dbReference>
<dbReference type="InterPro" id="IPR036511">
    <property type="entry name" value="TGT-like_sf"/>
</dbReference>
<dbReference type="InterPro" id="IPR002616">
    <property type="entry name" value="tRNA_ribo_trans-like"/>
</dbReference>
<dbReference type="NCBIfam" id="TIGR00430">
    <property type="entry name" value="Q_tRNA_tgt"/>
    <property type="match status" value="1"/>
</dbReference>
<dbReference type="NCBIfam" id="TIGR00449">
    <property type="entry name" value="tgt_general"/>
    <property type="match status" value="1"/>
</dbReference>
<dbReference type="PANTHER" id="PTHR46499">
    <property type="entry name" value="QUEUINE TRNA-RIBOSYLTRANSFERASE"/>
    <property type="match status" value="1"/>
</dbReference>
<dbReference type="PANTHER" id="PTHR46499:SF1">
    <property type="entry name" value="QUEUINE TRNA-RIBOSYLTRANSFERASE"/>
    <property type="match status" value="1"/>
</dbReference>
<dbReference type="Pfam" id="PF01702">
    <property type="entry name" value="TGT"/>
    <property type="match status" value="1"/>
</dbReference>
<dbReference type="SUPFAM" id="SSF51713">
    <property type="entry name" value="tRNA-guanine transglycosylase"/>
    <property type="match status" value="1"/>
</dbReference>
<name>TGT_SALPA</name>
<gene>
    <name evidence="1" type="primary">tgt</name>
    <name type="ordered locus">SPA2318</name>
</gene>